<accession>Q8XIU0</accession>
<feature type="chain" id="PRO_0000178329" description="Small ribosomal subunit protein bS21">
    <location>
        <begin position="1"/>
        <end position="58"/>
    </location>
</feature>
<feature type="region of interest" description="Disordered" evidence="2">
    <location>
        <begin position="30"/>
        <end position="58"/>
    </location>
</feature>
<feature type="compositionally biased region" description="Basic and acidic residues" evidence="2">
    <location>
        <begin position="31"/>
        <end position="42"/>
    </location>
</feature>
<feature type="compositionally biased region" description="Basic residues" evidence="2">
    <location>
        <begin position="43"/>
        <end position="58"/>
    </location>
</feature>
<comment type="similarity">
    <text evidence="1">Belongs to the bacterial ribosomal protein bS21 family.</text>
</comment>
<name>RS21_CLOPE</name>
<keyword id="KW-1185">Reference proteome</keyword>
<keyword id="KW-0687">Ribonucleoprotein</keyword>
<keyword id="KW-0689">Ribosomal protein</keyword>
<evidence type="ECO:0000255" key="1">
    <source>
        <dbReference type="HAMAP-Rule" id="MF_00358"/>
    </source>
</evidence>
<evidence type="ECO:0000256" key="2">
    <source>
        <dbReference type="SAM" id="MobiDB-lite"/>
    </source>
</evidence>
<evidence type="ECO:0000305" key="3"/>
<proteinExistence type="inferred from homology"/>
<dbReference type="EMBL" id="BA000016">
    <property type="protein sequence ID" value="BAB81729.1"/>
    <property type="molecule type" value="Genomic_DNA"/>
</dbReference>
<dbReference type="RefSeq" id="WP_003451446.1">
    <property type="nucleotide sequence ID" value="NC_003366.1"/>
</dbReference>
<dbReference type="SMR" id="Q8XIU0"/>
<dbReference type="STRING" id="195102.gene:10491293"/>
<dbReference type="GeneID" id="93001439"/>
<dbReference type="KEGG" id="cpe:CPE2023"/>
<dbReference type="HOGENOM" id="CLU_159258_1_2_9"/>
<dbReference type="Proteomes" id="UP000000818">
    <property type="component" value="Chromosome"/>
</dbReference>
<dbReference type="GO" id="GO:1990904">
    <property type="term" value="C:ribonucleoprotein complex"/>
    <property type="evidence" value="ECO:0007669"/>
    <property type="project" value="UniProtKB-KW"/>
</dbReference>
<dbReference type="GO" id="GO:0005840">
    <property type="term" value="C:ribosome"/>
    <property type="evidence" value="ECO:0007669"/>
    <property type="project" value="UniProtKB-KW"/>
</dbReference>
<dbReference type="GO" id="GO:0003735">
    <property type="term" value="F:structural constituent of ribosome"/>
    <property type="evidence" value="ECO:0007669"/>
    <property type="project" value="InterPro"/>
</dbReference>
<dbReference type="GO" id="GO:0006412">
    <property type="term" value="P:translation"/>
    <property type="evidence" value="ECO:0007669"/>
    <property type="project" value="UniProtKB-UniRule"/>
</dbReference>
<dbReference type="Gene3D" id="1.20.5.1150">
    <property type="entry name" value="Ribosomal protein S8"/>
    <property type="match status" value="1"/>
</dbReference>
<dbReference type="HAMAP" id="MF_00358">
    <property type="entry name" value="Ribosomal_bS21"/>
    <property type="match status" value="1"/>
</dbReference>
<dbReference type="InterPro" id="IPR001911">
    <property type="entry name" value="Ribosomal_bS21"/>
</dbReference>
<dbReference type="InterPro" id="IPR018278">
    <property type="entry name" value="Ribosomal_bS21_CS"/>
</dbReference>
<dbReference type="InterPro" id="IPR038380">
    <property type="entry name" value="Ribosomal_bS21_sf"/>
</dbReference>
<dbReference type="NCBIfam" id="TIGR00030">
    <property type="entry name" value="S21p"/>
    <property type="match status" value="1"/>
</dbReference>
<dbReference type="PANTHER" id="PTHR21109">
    <property type="entry name" value="MITOCHONDRIAL 28S RIBOSOMAL PROTEIN S21"/>
    <property type="match status" value="1"/>
</dbReference>
<dbReference type="PANTHER" id="PTHR21109:SF22">
    <property type="entry name" value="SMALL RIBOSOMAL SUBUNIT PROTEIN BS21"/>
    <property type="match status" value="1"/>
</dbReference>
<dbReference type="Pfam" id="PF01165">
    <property type="entry name" value="Ribosomal_S21"/>
    <property type="match status" value="1"/>
</dbReference>
<dbReference type="PRINTS" id="PR00976">
    <property type="entry name" value="RIBOSOMALS21"/>
</dbReference>
<dbReference type="PROSITE" id="PS01181">
    <property type="entry name" value="RIBOSOMAL_S21"/>
    <property type="match status" value="1"/>
</dbReference>
<reference key="1">
    <citation type="journal article" date="2002" name="Proc. Natl. Acad. Sci. U.S.A.">
        <title>Complete genome sequence of Clostridium perfringens, an anaerobic flesh-eater.</title>
        <authorList>
            <person name="Shimizu T."/>
            <person name="Ohtani K."/>
            <person name="Hirakawa H."/>
            <person name="Ohshima K."/>
            <person name="Yamashita A."/>
            <person name="Shiba T."/>
            <person name="Ogasawara N."/>
            <person name="Hattori M."/>
            <person name="Kuhara S."/>
            <person name="Hayashi H."/>
        </authorList>
    </citation>
    <scope>NUCLEOTIDE SEQUENCE [LARGE SCALE GENOMIC DNA]</scope>
    <source>
        <strain>13 / Type A</strain>
    </source>
</reference>
<protein>
    <recommendedName>
        <fullName evidence="1">Small ribosomal subunit protein bS21</fullName>
    </recommendedName>
    <alternativeName>
        <fullName evidence="3">30S ribosomal protein S21</fullName>
    </alternativeName>
</protein>
<organism>
    <name type="scientific">Clostridium perfringens (strain 13 / Type A)</name>
    <dbReference type="NCBI Taxonomy" id="195102"/>
    <lineage>
        <taxon>Bacteria</taxon>
        <taxon>Bacillati</taxon>
        <taxon>Bacillota</taxon>
        <taxon>Clostridia</taxon>
        <taxon>Eubacteriales</taxon>
        <taxon>Clostridiaceae</taxon>
        <taxon>Clostridium</taxon>
    </lineage>
</organism>
<gene>
    <name evidence="1" type="primary">rpsU</name>
    <name type="ordered locus">CPE2023</name>
</gene>
<sequence length="58" mass="7016">MSEIRVKENESLEQALRRFKRQCARAGVLSEVRKREHYEKPSVKRKKKSEAARKRKFK</sequence>